<name>PHNN_DICZ5</name>
<accession>D2C357</accession>
<comment type="function">
    <text evidence="1">Catalyzes the phosphorylation of ribose 1,5-bisphosphate to 5-phospho-D-ribosyl alpha-1-diphosphate (PRPP).</text>
</comment>
<comment type="catalytic activity">
    <reaction evidence="1">
        <text>alpha-D-ribose 1,5-bisphosphate + ATP = 5-phospho-alpha-D-ribose 1-diphosphate + ADP</text>
        <dbReference type="Rhea" id="RHEA:20109"/>
        <dbReference type="ChEBI" id="CHEBI:30616"/>
        <dbReference type="ChEBI" id="CHEBI:58017"/>
        <dbReference type="ChEBI" id="CHEBI:68688"/>
        <dbReference type="ChEBI" id="CHEBI:456216"/>
        <dbReference type="EC" id="2.7.4.23"/>
    </reaction>
</comment>
<comment type="pathway">
    <text evidence="1">Metabolic intermediate biosynthesis; 5-phospho-alpha-D-ribose 1-diphosphate biosynthesis; 5-phospho-alpha-D-ribose 1-diphosphate from D-ribose 5-phosphate (route II): step 3/3.</text>
</comment>
<comment type="similarity">
    <text evidence="1">Belongs to the ribose 1,5-bisphosphokinase family.</text>
</comment>
<reference key="1">
    <citation type="submission" date="2009-12" db="EMBL/GenBank/DDBJ databases">
        <title>Complete sequence of Dickeya dadantii Ech586.</title>
        <authorList>
            <consortium name="US DOE Joint Genome Institute"/>
            <person name="Lucas S."/>
            <person name="Copeland A."/>
            <person name="Lapidus A."/>
            <person name="Glavina del Rio T."/>
            <person name="Tice H."/>
            <person name="Bruce D."/>
            <person name="Goodwin L."/>
            <person name="Pitluck S."/>
            <person name="Munk A.C."/>
            <person name="Brettin T."/>
            <person name="Detter J.C."/>
            <person name="Han C."/>
            <person name="Tapia R."/>
            <person name="Larimer F."/>
            <person name="Land M."/>
            <person name="Hauser L."/>
            <person name="Kyrpides N."/>
            <person name="Mikhailova N."/>
            <person name="Balakrishnan V."/>
            <person name="Glasner J."/>
            <person name="Perna N.T."/>
        </authorList>
    </citation>
    <scope>NUCLEOTIDE SEQUENCE [LARGE SCALE GENOMIC DNA]</scope>
    <source>
        <strain>Ech586</strain>
    </source>
</reference>
<gene>
    <name evidence="1" type="primary">phnN</name>
    <name type="ordered locus">Dd586_2592</name>
</gene>
<sequence length="188" mass="21150">MARLIWLTGASGSGKDTLLDALRQTEPVRLLVAHRYITRPAQAGGENHIALSEAEFAYRREHNLFALHWQAHQYQYGIGIEVDHWLSAGLDVVVNGSRSHHQQAQQRYGSRLLPVCLQVSAAVLAQRLRQRGREDEAQIALRLQRADAMDILPATCRRLNNDGPLAQTLQAFHTLLAAEKSDFWQISL</sequence>
<keyword id="KW-0067">ATP-binding</keyword>
<keyword id="KW-0547">Nucleotide-binding</keyword>
<keyword id="KW-0808">Transferase</keyword>
<protein>
    <recommendedName>
        <fullName evidence="1">Ribose 1,5-bisphosphate phosphokinase PhnN</fullName>
        <ecNumber evidence="1">2.7.4.23</ecNumber>
    </recommendedName>
    <alternativeName>
        <fullName evidence="1">Ribose 1,5-bisphosphokinase</fullName>
    </alternativeName>
</protein>
<proteinExistence type="inferred from homology"/>
<organism>
    <name type="scientific">Dickeya zeae (strain Ech586)</name>
    <name type="common">Dickeya dadantii (strain Ech586)</name>
    <dbReference type="NCBI Taxonomy" id="590409"/>
    <lineage>
        <taxon>Bacteria</taxon>
        <taxon>Pseudomonadati</taxon>
        <taxon>Pseudomonadota</taxon>
        <taxon>Gammaproteobacteria</taxon>
        <taxon>Enterobacterales</taxon>
        <taxon>Pectobacteriaceae</taxon>
        <taxon>Dickeya</taxon>
        <taxon>Dickeya parazeae</taxon>
    </lineage>
</organism>
<evidence type="ECO:0000255" key="1">
    <source>
        <dbReference type="HAMAP-Rule" id="MF_00836"/>
    </source>
</evidence>
<feature type="chain" id="PRO_0000412781" description="Ribose 1,5-bisphosphate phosphokinase PhnN">
    <location>
        <begin position="1"/>
        <end position="188"/>
    </location>
</feature>
<dbReference type="EC" id="2.7.4.23" evidence="1"/>
<dbReference type="EMBL" id="CP001836">
    <property type="protein sequence ID" value="ACZ77438.1"/>
    <property type="molecule type" value="Genomic_DNA"/>
</dbReference>
<dbReference type="RefSeq" id="WP_012885250.1">
    <property type="nucleotide sequence ID" value="NC_013592.1"/>
</dbReference>
<dbReference type="SMR" id="D2C357"/>
<dbReference type="STRING" id="590409.Dd586_2592"/>
<dbReference type="KEGG" id="ddc:Dd586_2592"/>
<dbReference type="eggNOG" id="COG3709">
    <property type="taxonomic scope" value="Bacteria"/>
</dbReference>
<dbReference type="HOGENOM" id="CLU_102477_0_0_6"/>
<dbReference type="OrthoDB" id="341217at2"/>
<dbReference type="UniPathway" id="UPA00087">
    <property type="reaction ID" value="UER00175"/>
</dbReference>
<dbReference type="Proteomes" id="UP000001446">
    <property type="component" value="Chromosome"/>
</dbReference>
<dbReference type="GO" id="GO:0005829">
    <property type="term" value="C:cytosol"/>
    <property type="evidence" value="ECO:0007669"/>
    <property type="project" value="TreeGrafter"/>
</dbReference>
<dbReference type="GO" id="GO:0005524">
    <property type="term" value="F:ATP binding"/>
    <property type="evidence" value="ECO:0007669"/>
    <property type="project" value="UniProtKB-KW"/>
</dbReference>
<dbReference type="GO" id="GO:0033863">
    <property type="term" value="F:ribose 1,5-bisphosphate phosphokinase activity"/>
    <property type="evidence" value="ECO:0007669"/>
    <property type="project" value="UniProtKB-UniRule"/>
</dbReference>
<dbReference type="GO" id="GO:0006015">
    <property type="term" value="P:5-phosphoribose 1-diphosphate biosynthetic process"/>
    <property type="evidence" value="ECO:0007669"/>
    <property type="project" value="UniProtKB-UniRule"/>
</dbReference>
<dbReference type="GO" id="GO:0019634">
    <property type="term" value="P:organic phosphonate metabolic process"/>
    <property type="evidence" value="ECO:0007669"/>
    <property type="project" value="UniProtKB-UniRule"/>
</dbReference>
<dbReference type="FunFam" id="3.40.50.300:FF:000979">
    <property type="entry name" value="Ribose 1,5-bisphosphate phosphokinase PhnN"/>
    <property type="match status" value="1"/>
</dbReference>
<dbReference type="Gene3D" id="3.40.50.300">
    <property type="entry name" value="P-loop containing nucleotide triphosphate hydrolases"/>
    <property type="match status" value="1"/>
</dbReference>
<dbReference type="HAMAP" id="MF_00836">
    <property type="entry name" value="PhnN"/>
    <property type="match status" value="1"/>
</dbReference>
<dbReference type="InterPro" id="IPR008145">
    <property type="entry name" value="GK/Ca_channel_bsu"/>
</dbReference>
<dbReference type="InterPro" id="IPR027417">
    <property type="entry name" value="P-loop_NTPase"/>
</dbReference>
<dbReference type="InterPro" id="IPR012699">
    <property type="entry name" value="PhnN"/>
</dbReference>
<dbReference type="NCBIfam" id="TIGR02322">
    <property type="entry name" value="phosphon_PhnN"/>
    <property type="match status" value="1"/>
</dbReference>
<dbReference type="NCBIfam" id="NF007485">
    <property type="entry name" value="PRK10078.1"/>
    <property type="match status" value="1"/>
</dbReference>
<dbReference type="PANTHER" id="PTHR23117">
    <property type="entry name" value="GUANYLATE KINASE-RELATED"/>
    <property type="match status" value="1"/>
</dbReference>
<dbReference type="PANTHER" id="PTHR23117:SF8">
    <property type="entry name" value="RIBOSE 1,5-BISPHOSPHATE PHOSPHOKINASE PHNN"/>
    <property type="match status" value="1"/>
</dbReference>
<dbReference type="Pfam" id="PF13238">
    <property type="entry name" value="AAA_18"/>
    <property type="match status" value="1"/>
</dbReference>
<dbReference type="SMART" id="SM00072">
    <property type="entry name" value="GuKc"/>
    <property type="match status" value="1"/>
</dbReference>
<dbReference type="SUPFAM" id="SSF52540">
    <property type="entry name" value="P-loop containing nucleoside triphosphate hydrolases"/>
    <property type="match status" value="1"/>
</dbReference>